<accession>Q10080</accession>
<name>YAO1_SCHPO</name>
<comment type="similarity">
    <text evidence="2">Belongs to the UPF0654 (con-6) family.</text>
</comment>
<reference key="1">
    <citation type="journal article" date="2002" name="Nature">
        <title>The genome sequence of Schizosaccharomyces pombe.</title>
        <authorList>
            <person name="Wood V."/>
            <person name="Gwilliam R."/>
            <person name="Rajandream M.A."/>
            <person name="Lyne M.H."/>
            <person name="Lyne R."/>
            <person name="Stewart A."/>
            <person name="Sgouros J.G."/>
            <person name="Peat N."/>
            <person name="Hayles J."/>
            <person name="Baker S.G."/>
            <person name="Basham D."/>
            <person name="Bowman S."/>
            <person name="Brooks K."/>
            <person name="Brown D."/>
            <person name="Brown S."/>
            <person name="Chillingworth T."/>
            <person name="Churcher C.M."/>
            <person name="Collins M."/>
            <person name="Connor R."/>
            <person name="Cronin A."/>
            <person name="Davis P."/>
            <person name="Feltwell T."/>
            <person name="Fraser A."/>
            <person name="Gentles S."/>
            <person name="Goble A."/>
            <person name="Hamlin N."/>
            <person name="Harris D.E."/>
            <person name="Hidalgo J."/>
            <person name="Hodgson G."/>
            <person name="Holroyd S."/>
            <person name="Hornsby T."/>
            <person name="Howarth S."/>
            <person name="Huckle E.J."/>
            <person name="Hunt S."/>
            <person name="Jagels K."/>
            <person name="James K.D."/>
            <person name="Jones L."/>
            <person name="Jones M."/>
            <person name="Leather S."/>
            <person name="McDonald S."/>
            <person name="McLean J."/>
            <person name="Mooney P."/>
            <person name="Moule S."/>
            <person name="Mungall K.L."/>
            <person name="Murphy L.D."/>
            <person name="Niblett D."/>
            <person name="Odell C."/>
            <person name="Oliver K."/>
            <person name="O'Neil S."/>
            <person name="Pearson D."/>
            <person name="Quail M.A."/>
            <person name="Rabbinowitsch E."/>
            <person name="Rutherford K.M."/>
            <person name="Rutter S."/>
            <person name="Saunders D."/>
            <person name="Seeger K."/>
            <person name="Sharp S."/>
            <person name="Skelton J."/>
            <person name="Simmonds M.N."/>
            <person name="Squares R."/>
            <person name="Squares S."/>
            <person name="Stevens K."/>
            <person name="Taylor K."/>
            <person name="Taylor R.G."/>
            <person name="Tivey A."/>
            <person name="Walsh S.V."/>
            <person name="Warren T."/>
            <person name="Whitehead S."/>
            <person name="Woodward J.R."/>
            <person name="Volckaert G."/>
            <person name="Aert R."/>
            <person name="Robben J."/>
            <person name="Grymonprez B."/>
            <person name="Weltjens I."/>
            <person name="Vanstreels E."/>
            <person name="Rieger M."/>
            <person name="Schaefer M."/>
            <person name="Mueller-Auer S."/>
            <person name="Gabel C."/>
            <person name="Fuchs M."/>
            <person name="Duesterhoeft A."/>
            <person name="Fritzc C."/>
            <person name="Holzer E."/>
            <person name="Moestl D."/>
            <person name="Hilbert H."/>
            <person name="Borzym K."/>
            <person name="Langer I."/>
            <person name="Beck A."/>
            <person name="Lehrach H."/>
            <person name="Reinhardt R."/>
            <person name="Pohl T.M."/>
            <person name="Eger P."/>
            <person name="Zimmermann W."/>
            <person name="Wedler H."/>
            <person name="Wambutt R."/>
            <person name="Purnelle B."/>
            <person name="Goffeau A."/>
            <person name="Cadieu E."/>
            <person name="Dreano S."/>
            <person name="Gloux S."/>
            <person name="Lelaure V."/>
            <person name="Mottier S."/>
            <person name="Galibert F."/>
            <person name="Aves S.J."/>
            <person name="Xiang Z."/>
            <person name="Hunt C."/>
            <person name="Moore K."/>
            <person name="Hurst S.M."/>
            <person name="Lucas M."/>
            <person name="Rochet M."/>
            <person name="Gaillardin C."/>
            <person name="Tallada V.A."/>
            <person name="Garzon A."/>
            <person name="Thode G."/>
            <person name="Daga R.R."/>
            <person name="Cruzado L."/>
            <person name="Jimenez J."/>
            <person name="Sanchez M."/>
            <person name="del Rey F."/>
            <person name="Benito J."/>
            <person name="Dominguez A."/>
            <person name="Revuelta J.L."/>
            <person name="Moreno S."/>
            <person name="Armstrong J."/>
            <person name="Forsburg S.L."/>
            <person name="Cerutti L."/>
            <person name="Lowe T."/>
            <person name="McCombie W.R."/>
            <person name="Paulsen I."/>
            <person name="Potashkin J."/>
            <person name="Shpakovski G.V."/>
            <person name="Ussery D."/>
            <person name="Barrell B.G."/>
            <person name="Nurse P."/>
        </authorList>
    </citation>
    <scope>NUCLEOTIDE SEQUENCE [LARGE SCALE GENOMIC DNA]</scope>
    <source>
        <strain>972 / ATCC 24843</strain>
    </source>
</reference>
<evidence type="ECO:0000256" key="1">
    <source>
        <dbReference type="SAM" id="MobiDB-lite"/>
    </source>
</evidence>
<evidence type="ECO:0000305" key="2"/>
<protein>
    <recommendedName>
        <fullName>UPF0654 protein C11D3.01c</fullName>
    </recommendedName>
</protein>
<gene>
    <name type="ORF">SPAC11D3.01c</name>
</gene>
<dbReference type="EMBL" id="CU329670">
    <property type="protein sequence ID" value="CAA92302.1"/>
    <property type="molecule type" value="Genomic_DNA"/>
</dbReference>
<dbReference type="PIR" id="T37512">
    <property type="entry name" value="T37512"/>
</dbReference>
<dbReference type="RefSeq" id="NP_592798.1">
    <property type="nucleotide sequence ID" value="NM_001018198.2"/>
</dbReference>
<dbReference type="SMR" id="Q10080"/>
<dbReference type="FunCoup" id="Q10080">
    <property type="interactions" value="419"/>
</dbReference>
<dbReference type="STRING" id="284812.Q10080"/>
<dbReference type="iPTMnet" id="Q10080"/>
<dbReference type="PaxDb" id="4896-SPAC11D3.01c.1"/>
<dbReference type="EnsemblFungi" id="SPAC11D3.01c.1">
    <property type="protein sequence ID" value="SPAC11D3.01c.1:pep"/>
    <property type="gene ID" value="SPAC11D3.01c"/>
</dbReference>
<dbReference type="KEGG" id="spo:2542984"/>
<dbReference type="PomBase" id="SPAC11D3.01c"/>
<dbReference type="VEuPathDB" id="FungiDB:SPAC11D3.01c"/>
<dbReference type="eggNOG" id="ENOG502S75W">
    <property type="taxonomic scope" value="Eukaryota"/>
</dbReference>
<dbReference type="HOGENOM" id="CLU_107705_2_0_1"/>
<dbReference type="InParanoid" id="Q10080"/>
<dbReference type="OMA" id="YKATMKN"/>
<dbReference type="PhylomeDB" id="Q10080"/>
<dbReference type="PRO" id="PR:Q10080"/>
<dbReference type="Proteomes" id="UP000002485">
    <property type="component" value="Chromosome I"/>
</dbReference>
<dbReference type="GO" id="GO:0005737">
    <property type="term" value="C:cytoplasm"/>
    <property type="evidence" value="ECO:0000318"/>
    <property type="project" value="GO_Central"/>
</dbReference>
<dbReference type="GO" id="GO:0005829">
    <property type="term" value="C:cytosol"/>
    <property type="evidence" value="ECO:0007005"/>
    <property type="project" value="PomBase"/>
</dbReference>
<dbReference type="GO" id="GO:0005634">
    <property type="term" value="C:nucleus"/>
    <property type="evidence" value="ECO:0007005"/>
    <property type="project" value="PomBase"/>
</dbReference>
<dbReference type="InterPro" id="IPR018824">
    <property type="entry name" value="Conidiation-specific_6"/>
</dbReference>
<dbReference type="InterPro" id="IPR052670">
    <property type="entry name" value="UPF0654_domain"/>
</dbReference>
<dbReference type="PANTHER" id="PTHR36576">
    <property type="entry name" value="UPF0654 PROTEIN C11D3.01C-RELATED"/>
    <property type="match status" value="1"/>
</dbReference>
<dbReference type="PANTHER" id="PTHR36576:SF1">
    <property type="entry name" value="UPF0654 PROTEIN C11D3.01C-RELATED"/>
    <property type="match status" value="1"/>
</dbReference>
<dbReference type="Pfam" id="PF10346">
    <property type="entry name" value="Con-6"/>
    <property type="match status" value="2"/>
</dbReference>
<organism>
    <name type="scientific">Schizosaccharomyces pombe (strain 972 / ATCC 24843)</name>
    <name type="common">Fission yeast</name>
    <dbReference type="NCBI Taxonomy" id="284812"/>
    <lineage>
        <taxon>Eukaryota</taxon>
        <taxon>Fungi</taxon>
        <taxon>Dikarya</taxon>
        <taxon>Ascomycota</taxon>
        <taxon>Taphrinomycotina</taxon>
        <taxon>Schizosaccharomycetes</taxon>
        <taxon>Schizosaccharomycetales</taxon>
        <taxon>Schizosaccharomycetaceae</taxon>
        <taxon>Schizosaccharomyces</taxon>
    </lineage>
</organism>
<proteinExistence type="inferred from homology"/>
<feature type="chain" id="PRO_0000116451" description="UPF0654 protein C11D3.01c">
    <location>
        <begin position="1"/>
        <end position="79"/>
    </location>
</feature>
<feature type="region of interest" description="Disordered" evidence="1">
    <location>
        <begin position="1"/>
        <end position="79"/>
    </location>
</feature>
<feature type="compositionally biased region" description="Basic and acidic residues" evidence="1">
    <location>
        <begin position="22"/>
        <end position="45"/>
    </location>
</feature>
<keyword id="KW-1185">Reference proteome</keyword>
<sequence length="79" mass="8772">MPNPGNVIGGHKAALHNPNVSEETKQREKEYLEEHEGEVGEEHQKNTGNVRGGYKAAMHNPNVSGEAKQRAQEELENLE</sequence>